<feature type="chain" id="PRO_0000134956" description="Flavin prenyltransferase UbiX">
    <location>
        <begin position="1"/>
        <end position="206"/>
    </location>
</feature>
<feature type="binding site" evidence="1">
    <location>
        <begin position="14"/>
        <end position="16"/>
    </location>
    <ligand>
        <name>FMN</name>
        <dbReference type="ChEBI" id="CHEBI:58210"/>
    </ligand>
</feature>
<feature type="binding site" evidence="1">
    <location>
        <position position="40"/>
    </location>
    <ligand>
        <name>FMN</name>
        <dbReference type="ChEBI" id="CHEBI:58210"/>
    </ligand>
</feature>
<feature type="binding site" evidence="1">
    <location>
        <begin position="101"/>
        <end position="104"/>
    </location>
    <ligand>
        <name>FMN</name>
        <dbReference type="ChEBI" id="CHEBI:58210"/>
    </ligand>
</feature>
<feature type="binding site" evidence="1">
    <location>
        <position position="136"/>
    </location>
    <ligand>
        <name>FMN</name>
        <dbReference type="ChEBI" id="CHEBI:58210"/>
    </ligand>
</feature>
<feature type="binding site" evidence="1">
    <location>
        <position position="166"/>
    </location>
    <ligand>
        <name>dimethylallyl phosphate</name>
        <dbReference type="ChEBI" id="CHEBI:88052"/>
    </ligand>
</feature>
<feature type="binding site" evidence="1">
    <location>
        <position position="182"/>
    </location>
    <ligand>
        <name>dimethylallyl phosphate</name>
        <dbReference type="ChEBI" id="CHEBI:88052"/>
    </ligand>
</feature>
<keyword id="KW-0285">Flavoprotein</keyword>
<keyword id="KW-0288">FMN</keyword>
<keyword id="KW-0637">Prenyltransferase</keyword>
<keyword id="KW-1185">Reference proteome</keyword>
<keyword id="KW-0808">Transferase</keyword>
<accession>Q9KCC2</accession>
<gene>
    <name evidence="1" type="primary">ubiX</name>
    <name type="ordered locus">BH1651</name>
</gene>
<dbReference type="EC" id="2.5.1.129" evidence="1"/>
<dbReference type="EMBL" id="BA000004">
    <property type="protein sequence ID" value="BAB05370.1"/>
    <property type="molecule type" value="Genomic_DNA"/>
</dbReference>
<dbReference type="PIR" id="C83856">
    <property type="entry name" value="C83856"/>
</dbReference>
<dbReference type="RefSeq" id="WP_010897813.1">
    <property type="nucleotide sequence ID" value="NC_002570.2"/>
</dbReference>
<dbReference type="SMR" id="Q9KCC2"/>
<dbReference type="STRING" id="272558.gene:10727549"/>
<dbReference type="KEGG" id="bha:BH1651"/>
<dbReference type="eggNOG" id="COG0163">
    <property type="taxonomic scope" value="Bacteria"/>
</dbReference>
<dbReference type="HOGENOM" id="CLU_074522_0_1_9"/>
<dbReference type="OrthoDB" id="9781577at2"/>
<dbReference type="Proteomes" id="UP000001258">
    <property type="component" value="Chromosome"/>
</dbReference>
<dbReference type="GO" id="GO:0016831">
    <property type="term" value="F:carboxy-lyase activity"/>
    <property type="evidence" value="ECO:0007669"/>
    <property type="project" value="TreeGrafter"/>
</dbReference>
<dbReference type="GO" id="GO:0106141">
    <property type="term" value="F:flavin prenyltransferase activity"/>
    <property type="evidence" value="ECO:0007669"/>
    <property type="project" value="UniProtKB-EC"/>
</dbReference>
<dbReference type="FunFam" id="3.40.50.1950:FF:000001">
    <property type="entry name" value="Flavin prenyltransferase UbiX"/>
    <property type="match status" value="1"/>
</dbReference>
<dbReference type="Gene3D" id="3.40.50.1950">
    <property type="entry name" value="Flavin prenyltransferase-like"/>
    <property type="match status" value="1"/>
</dbReference>
<dbReference type="HAMAP" id="MF_01984">
    <property type="entry name" value="ubiX_pad"/>
    <property type="match status" value="1"/>
</dbReference>
<dbReference type="InterPro" id="IPR036551">
    <property type="entry name" value="Flavin_trans-like"/>
</dbReference>
<dbReference type="InterPro" id="IPR003382">
    <property type="entry name" value="Flavoprotein"/>
</dbReference>
<dbReference type="InterPro" id="IPR004507">
    <property type="entry name" value="UbiX-like"/>
</dbReference>
<dbReference type="NCBIfam" id="NF004685">
    <property type="entry name" value="PRK06029.1"/>
    <property type="match status" value="1"/>
</dbReference>
<dbReference type="NCBIfam" id="TIGR00421">
    <property type="entry name" value="ubiX_pad"/>
    <property type="match status" value="1"/>
</dbReference>
<dbReference type="PANTHER" id="PTHR43374">
    <property type="entry name" value="FLAVIN PRENYLTRANSFERASE"/>
    <property type="match status" value="1"/>
</dbReference>
<dbReference type="PANTHER" id="PTHR43374:SF1">
    <property type="entry name" value="FLAVIN PRENYLTRANSFERASE PAD1, MITOCHONDRIAL"/>
    <property type="match status" value="1"/>
</dbReference>
<dbReference type="Pfam" id="PF02441">
    <property type="entry name" value="Flavoprotein"/>
    <property type="match status" value="1"/>
</dbReference>
<dbReference type="SUPFAM" id="SSF52507">
    <property type="entry name" value="Homo-oligomeric flavin-containing Cys decarboxylases, HFCD"/>
    <property type="match status" value="1"/>
</dbReference>
<name>UBIX_HALH5</name>
<evidence type="ECO:0000255" key="1">
    <source>
        <dbReference type="HAMAP-Rule" id="MF_01984"/>
    </source>
</evidence>
<protein>
    <recommendedName>
        <fullName evidence="1">Flavin prenyltransferase UbiX</fullName>
        <ecNumber evidence="1">2.5.1.129</ecNumber>
    </recommendedName>
</protein>
<comment type="function">
    <text evidence="1">Flavin prenyltransferase that catalyzes the synthesis of the prenylated FMN cofactor (prenyl-FMN) for 4-hydroxy-3-polyprenylbenzoic acid decarboxylase UbiD. The prenyltransferase is metal-independent and links a dimethylallyl moiety from dimethylallyl monophosphate (DMAP) to the flavin N5 and C6 atoms of FMN.</text>
</comment>
<comment type="catalytic activity">
    <reaction evidence="1">
        <text>dimethylallyl phosphate + FMNH2 = prenylated FMNH2 + phosphate</text>
        <dbReference type="Rhea" id="RHEA:37743"/>
        <dbReference type="ChEBI" id="CHEBI:43474"/>
        <dbReference type="ChEBI" id="CHEBI:57618"/>
        <dbReference type="ChEBI" id="CHEBI:87467"/>
        <dbReference type="ChEBI" id="CHEBI:88052"/>
        <dbReference type="EC" id="2.5.1.129"/>
    </reaction>
</comment>
<comment type="similarity">
    <text evidence="1">Belongs to the UbiX/PAD1 family.</text>
</comment>
<organism>
    <name type="scientific">Halalkalibacterium halodurans (strain ATCC BAA-125 / DSM 18197 / FERM 7344 / JCM 9153 / C-125)</name>
    <name type="common">Bacillus halodurans</name>
    <dbReference type="NCBI Taxonomy" id="272558"/>
    <lineage>
        <taxon>Bacteria</taxon>
        <taxon>Bacillati</taxon>
        <taxon>Bacillota</taxon>
        <taxon>Bacilli</taxon>
        <taxon>Bacillales</taxon>
        <taxon>Bacillaceae</taxon>
        <taxon>Halalkalibacterium (ex Joshi et al. 2022)</taxon>
    </lineage>
</organism>
<proteinExistence type="inferred from homology"/>
<reference key="1">
    <citation type="journal article" date="2000" name="Nucleic Acids Res.">
        <title>Complete genome sequence of the alkaliphilic bacterium Bacillus halodurans and genomic sequence comparison with Bacillus subtilis.</title>
        <authorList>
            <person name="Takami H."/>
            <person name="Nakasone K."/>
            <person name="Takaki Y."/>
            <person name="Maeno G."/>
            <person name="Sasaki R."/>
            <person name="Masui N."/>
            <person name="Fuji F."/>
            <person name="Hirama C."/>
            <person name="Nakamura Y."/>
            <person name="Ogasawara N."/>
            <person name="Kuhara S."/>
            <person name="Horikoshi K."/>
        </authorList>
    </citation>
    <scope>NUCLEOTIDE SEQUENCE [LARGE SCALE GENOMIC DNA]</scope>
    <source>
        <strain>ATCC BAA-125 / DSM 18197 / FERM 7344 / JCM 9153 / C-125</strain>
    </source>
</reference>
<sequence length="206" mass="23059">MTVYKGIYTVGITGASGAQYGIRLVQEMKKKGYKVHLVITEAGWQVFREELLIQTDDRKMVIDELFAAGDGEVSFHQLDDYTAPIASGSYQNRGMIIIPCSMGTLSGIAQGASGNLLERTADVMLKEKRRLVIVPRETPLNQIHLENMLKLSKMGVTILPAMPGFYQLPKTMDDLIDFVVGKALDQLGIEHELFTRWGEERDNHSR</sequence>